<comment type="function">
    <text evidence="1">This protein is one of the two subunits of integration host factor, a specific DNA-binding protein that functions in genetic recombination as well as in transcriptional and translational control.</text>
</comment>
<comment type="subunit">
    <text evidence="1">Heterodimer of an alpha and a beta chain.</text>
</comment>
<comment type="similarity">
    <text evidence="1">Belongs to the bacterial histone-like protein family.</text>
</comment>
<keyword id="KW-0233">DNA recombination</keyword>
<keyword id="KW-0238">DNA-binding</keyword>
<keyword id="KW-0804">Transcription</keyword>
<keyword id="KW-0805">Transcription regulation</keyword>
<keyword id="KW-0810">Translation regulation</keyword>
<feature type="chain" id="PRO_0000277708" description="Integration host factor subunit alpha">
    <location>
        <begin position="1"/>
        <end position="97"/>
    </location>
</feature>
<evidence type="ECO:0000255" key="1">
    <source>
        <dbReference type="HAMAP-Rule" id="MF_00380"/>
    </source>
</evidence>
<accession>Q6F874</accession>
<sequence length="97" mass="11075">MTALTKADMADHLSELTSLNRREAKQMVELFFDEISQALIAGEHVKLSGFGNFELRDKRERPGRNPKTGEEIPISARRVVTFRAGQKFRQRVGTEQE</sequence>
<name>IHFA_ACIAD</name>
<protein>
    <recommendedName>
        <fullName evidence="1">Integration host factor subunit alpha</fullName>
        <shortName evidence="1">IHF-alpha</shortName>
    </recommendedName>
</protein>
<dbReference type="EMBL" id="CR543861">
    <property type="protein sequence ID" value="CAG69741.1"/>
    <property type="molecule type" value="Genomic_DNA"/>
</dbReference>
<dbReference type="RefSeq" id="WP_004924549.1">
    <property type="nucleotide sequence ID" value="NC_005966.1"/>
</dbReference>
<dbReference type="SMR" id="Q6F874"/>
<dbReference type="STRING" id="202950.GCA_001485005_02701"/>
<dbReference type="GeneID" id="45235263"/>
<dbReference type="KEGG" id="aci:ACIAD3040"/>
<dbReference type="eggNOG" id="COG0776">
    <property type="taxonomic scope" value="Bacteria"/>
</dbReference>
<dbReference type="HOGENOM" id="CLU_105066_1_3_6"/>
<dbReference type="OrthoDB" id="9797747at2"/>
<dbReference type="BioCyc" id="ASP62977:ACIAD_RS13740-MONOMER"/>
<dbReference type="Proteomes" id="UP000000430">
    <property type="component" value="Chromosome"/>
</dbReference>
<dbReference type="GO" id="GO:0005829">
    <property type="term" value="C:cytosol"/>
    <property type="evidence" value="ECO:0007669"/>
    <property type="project" value="TreeGrafter"/>
</dbReference>
<dbReference type="GO" id="GO:0003677">
    <property type="term" value="F:DNA binding"/>
    <property type="evidence" value="ECO:0007669"/>
    <property type="project" value="UniProtKB-UniRule"/>
</dbReference>
<dbReference type="GO" id="GO:0030527">
    <property type="term" value="F:structural constituent of chromatin"/>
    <property type="evidence" value="ECO:0007669"/>
    <property type="project" value="InterPro"/>
</dbReference>
<dbReference type="GO" id="GO:0006310">
    <property type="term" value="P:DNA recombination"/>
    <property type="evidence" value="ECO:0007669"/>
    <property type="project" value="UniProtKB-UniRule"/>
</dbReference>
<dbReference type="GO" id="GO:0009893">
    <property type="term" value="P:positive regulation of metabolic process"/>
    <property type="evidence" value="ECO:0007669"/>
    <property type="project" value="UniProtKB-ARBA"/>
</dbReference>
<dbReference type="GO" id="GO:0006355">
    <property type="term" value="P:regulation of DNA-templated transcription"/>
    <property type="evidence" value="ECO:0007669"/>
    <property type="project" value="UniProtKB-UniRule"/>
</dbReference>
<dbReference type="GO" id="GO:0006417">
    <property type="term" value="P:regulation of translation"/>
    <property type="evidence" value="ECO:0007669"/>
    <property type="project" value="UniProtKB-UniRule"/>
</dbReference>
<dbReference type="CDD" id="cd13835">
    <property type="entry name" value="IHF_A"/>
    <property type="match status" value="1"/>
</dbReference>
<dbReference type="FunFam" id="4.10.520.10:FF:000002">
    <property type="entry name" value="Integration host factor subunit alpha"/>
    <property type="match status" value="1"/>
</dbReference>
<dbReference type="Gene3D" id="4.10.520.10">
    <property type="entry name" value="IHF-like DNA-binding proteins"/>
    <property type="match status" value="1"/>
</dbReference>
<dbReference type="HAMAP" id="MF_00380">
    <property type="entry name" value="IHF_alpha"/>
    <property type="match status" value="1"/>
</dbReference>
<dbReference type="InterPro" id="IPR000119">
    <property type="entry name" value="Hist_DNA-bd"/>
</dbReference>
<dbReference type="InterPro" id="IPR020816">
    <property type="entry name" value="Histone-like_DNA-bd_CS"/>
</dbReference>
<dbReference type="InterPro" id="IPR010992">
    <property type="entry name" value="IHF-like_DNA-bd_dom_sf"/>
</dbReference>
<dbReference type="InterPro" id="IPR005684">
    <property type="entry name" value="IHF_alpha"/>
</dbReference>
<dbReference type="NCBIfam" id="TIGR00987">
    <property type="entry name" value="himA"/>
    <property type="match status" value="1"/>
</dbReference>
<dbReference type="NCBIfam" id="NF001401">
    <property type="entry name" value="PRK00285.1"/>
    <property type="match status" value="1"/>
</dbReference>
<dbReference type="PANTHER" id="PTHR33175">
    <property type="entry name" value="DNA-BINDING PROTEIN HU"/>
    <property type="match status" value="1"/>
</dbReference>
<dbReference type="PANTHER" id="PTHR33175:SF2">
    <property type="entry name" value="INTEGRATION HOST FACTOR SUBUNIT ALPHA"/>
    <property type="match status" value="1"/>
</dbReference>
<dbReference type="Pfam" id="PF00216">
    <property type="entry name" value="Bac_DNA_binding"/>
    <property type="match status" value="1"/>
</dbReference>
<dbReference type="PRINTS" id="PR01727">
    <property type="entry name" value="DNABINDINGHU"/>
</dbReference>
<dbReference type="SMART" id="SM00411">
    <property type="entry name" value="BHL"/>
    <property type="match status" value="1"/>
</dbReference>
<dbReference type="SUPFAM" id="SSF47729">
    <property type="entry name" value="IHF-like DNA-binding proteins"/>
    <property type="match status" value="1"/>
</dbReference>
<dbReference type="PROSITE" id="PS00045">
    <property type="entry name" value="HISTONE_LIKE"/>
    <property type="match status" value="1"/>
</dbReference>
<proteinExistence type="inferred from homology"/>
<gene>
    <name evidence="1" type="primary">ihfA</name>
    <name evidence="1" type="synonym">himA</name>
    <name type="ordered locus">ACIAD3040</name>
</gene>
<organism>
    <name type="scientific">Acinetobacter baylyi (strain ATCC 33305 / BD413 / ADP1)</name>
    <dbReference type="NCBI Taxonomy" id="62977"/>
    <lineage>
        <taxon>Bacteria</taxon>
        <taxon>Pseudomonadati</taxon>
        <taxon>Pseudomonadota</taxon>
        <taxon>Gammaproteobacteria</taxon>
        <taxon>Moraxellales</taxon>
        <taxon>Moraxellaceae</taxon>
        <taxon>Acinetobacter</taxon>
    </lineage>
</organism>
<reference key="1">
    <citation type="journal article" date="2004" name="Nucleic Acids Res.">
        <title>Unique features revealed by the genome sequence of Acinetobacter sp. ADP1, a versatile and naturally transformation competent bacterium.</title>
        <authorList>
            <person name="Barbe V."/>
            <person name="Vallenet D."/>
            <person name="Fonknechten N."/>
            <person name="Kreimeyer A."/>
            <person name="Oztas S."/>
            <person name="Labarre L."/>
            <person name="Cruveiller S."/>
            <person name="Robert C."/>
            <person name="Duprat S."/>
            <person name="Wincker P."/>
            <person name="Ornston L.N."/>
            <person name="Weissenbach J."/>
            <person name="Marliere P."/>
            <person name="Cohen G.N."/>
            <person name="Medigue C."/>
        </authorList>
    </citation>
    <scope>NUCLEOTIDE SEQUENCE [LARGE SCALE GENOMIC DNA]</scope>
    <source>
        <strain>ATCC 33305 / BD413 / ADP1</strain>
    </source>
</reference>